<feature type="chain" id="PRO_0000120844" description="Uracil phosphoribosyltransferase">
    <location>
        <begin position="1"/>
        <end position="209"/>
    </location>
</feature>
<feature type="binding site" evidence="1">
    <location>
        <position position="79"/>
    </location>
    <ligand>
        <name>5-phospho-alpha-D-ribose 1-diphosphate</name>
        <dbReference type="ChEBI" id="CHEBI:58017"/>
    </ligand>
</feature>
<feature type="binding site" evidence="1">
    <location>
        <position position="104"/>
    </location>
    <ligand>
        <name>5-phospho-alpha-D-ribose 1-diphosphate</name>
        <dbReference type="ChEBI" id="CHEBI:58017"/>
    </ligand>
</feature>
<feature type="binding site" evidence="1">
    <location>
        <begin position="131"/>
        <end position="139"/>
    </location>
    <ligand>
        <name>5-phospho-alpha-D-ribose 1-diphosphate</name>
        <dbReference type="ChEBI" id="CHEBI:58017"/>
    </ligand>
</feature>
<feature type="binding site" evidence="1">
    <location>
        <position position="194"/>
    </location>
    <ligand>
        <name>uracil</name>
        <dbReference type="ChEBI" id="CHEBI:17568"/>
    </ligand>
</feature>
<feature type="binding site" evidence="1">
    <location>
        <begin position="199"/>
        <end position="201"/>
    </location>
    <ligand>
        <name>uracil</name>
        <dbReference type="ChEBI" id="CHEBI:17568"/>
    </ligand>
</feature>
<feature type="binding site" evidence="1">
    <location>
        <position position="200"/>
    </location>
    <ligand>
        <name>5-phospho-alpha-D-ribose 1-diphosphate</name>
        <dbReference type="ChEBI" id="CHEBI:58017"/>
    </ligand>
</feature>
<name>UPP_LISIN</name>
<reference key="1">
    <citation type="journal article" date="2001" name="Science">
        <title>Comparative genomics of Listeria species.</title>
        <authorList>
            <person name="Glaser P."/>
            <person name="Frangeul L."/>
            <person name="Buchrieser C."/>
            <person name="Rusniok C."/>
            <person name="Amend A."/>
            <person name="Baquero F."/>
            <person name="Berche P."/>
            <person name="Bloecker H."/>
            <person name="Brandt P."/>
            <person name="Chakraborty T."/>
            <person name="Charbit A."/>
            <person name="Chetouani F."/>
            <person name="Couve E."/>
            <person name="de Daruvar A."/>
            <person name="Dehoux P."/>
            <person name="Domann E."/>
            <person name="Dominguez-Bernal G."/>
            <person name="Duchaud E."/>
            <person name="Durant L."/>
            <person name="Dussurget O."/>
            <person name="Entian K.-D."/>
            <person name="Fsihi H."/>
            <person name="Garcia-del Portillo F."/>
            <person name="Garrido P."/>
            <person name="Gautier L."/>
            <person name="Goebel W."/>
            <person name="Gomez-Lopez N."/>
            <person name="Hain T."/>
            <person name="Hauf J."/>
            <person name="Jackson D."/>
            <person name="Jones L.-M."/>
            <person name="Kaerst U."/>
            <person name="Kreft J."/>
            <person name="Kuhn M."/>
            <person name="Kunst F."/>
            <person name="Kurapkat G."/>
            <person name="Madueno E."/>
            <person name="Maitournam A."/>
            <person name="Mata Vicente J."/>
            <person name="Ng E."/>
            <person name="Nedjari H."/>
            <person name="Nordsiek G."/>
            <person name="Novella S."/>
            <person name="de Pablos B."/>
            <person name="Perez-Diaz J.-C."/>
            <person name="Purcell R."/>
            <person name="Remmel B."/>
            <person name="Rose M."/>
            <person name="Schlueter T."/>
            <person name="Simoes N."/>
            <person name="Tierrez A."/>
            <person name="Vazquez-Boland J.-A."/>
            <person name="Voss H."/>
            <person name="Wehland J."/>
            <person name="Cossart P."/>
        </authorList>
    </citation>
    <scope>NUCLEOTIDE SEQUENCE [LARGE SCALE GENOMIC DNA]</scope>
    <source>
        <strain>ATCC BAA-680 / CLIP 11262</strain>
    </source>
</reference>
<proteinExistence type="inferred from homology"/>
<protein>
    <recommendedName>
        <fullName evidence="1">Uracil phosphoribosyltransferase</fullName>
        <ecNumber evidence="1">2.4.2.9</ecNumber>
    </recommendedName>
    <alternativeName>
        <fullName evidence="1">UMP pyrophosphorylase</fullName>
    </alternativeName>
    <alternativeName>
        <fullName evidence="1">UPRTase</fullName>
    </alternativeName>
</protein>
<evidence type="ECO:0000255" key="1">
    <source>
        <dbReference type="HAMAP-Rule" id="MF_01218"/>
    </source>
</evidence>
<organism>
    <name type="scientific">Listeria innocua serovar 6a (strain ATCC BAA-680 / CLIP 11262)</name>
    <dbReference type="NCBI Taxonomy" id="272626"/>
    <lineage>
        <taxon>Bacteria</taxon>
        <taxon>Bacillati</taxon>
        <taxon>Bacillota</taxon>
        <taxon>Bacilli</taxon>
        <taxon>Bacillales</taxon>
        <taxon>Listeriaceae</taxon>
        <taxon>Listeria</taxon>
    </lineage>
</organism>
<sequence length="209" mass="22945">MANVHVINHPLVQHKLTIIRDKNTGTKAFRELVDEVATLMAYEITRDMELEDIQVETPLQTTTAKTLTGKKLGVVPILRAGLGMQDGILKLIPAAKVGHVGLYRDHDTLEPVEYFVKLPSDVEERLFIVVDPMLATGGSAIMAIDCLKKRGARNMKFMCLVAAPEGVKALQEAHPDVEIYVAGLDEKLDENGYIRPGLGDAGDRLFGTK</sequence>
<gene>
    <name evidence="1" type="primary">upp</name>
    <name type="ordered locus">lin2682</name>
</gene>
<keyword id="KW-0021">Allosteric enzyme</keyword>
<keyword id="KW-0328">Glycosyltransferase</keyword>
<keyword id="KW-0342">GTP-binding</keyword>
<keyword id="KW-0460">Magnesium</keyword>
<keyword id="KW-0547">Nucleotide-binding</keyword>
<keyword id="KW-0808">Transferase</keyword>
<accession>Q927V5</accession>
<comment type="function">
    <text evidence="1">Catalyzes the conversion of uracil and 5-phospho-alpha-D-ribose 1-diphosphate (PRPP) to UMP and diphosphate.</text>
</comment>
<comment type="catalytic activity">
    <reaction evidence="1">
        <text>UMP + diphosphate = 5-phospho-alpha-D-ribose 1-diphosphate + uracil</text>
        <dbReference type="Rhea" id="RHEA:13017"/>
        <dbReference type="ChEBI" id="CHEBI:17568"/>
        <dbReference type="ChEBI" id="CHEBI:33019"/>
        <dbReference type="ChEBI" id="CHEBI:57865"/>
        <dbReference type="ChEBI" id="CHEBI:58017"/>
        <dbReference type="EC" id="2.4.2.9"/>
    </reaction>
</comment>
<comment type="cofactor">
    <cofactor evidence="1">
        <name>Mg(2+)</name>
        <dbReference type="ChEBI" id="CHEBI:18420"/>
    </cofactor>
    <text evidence="1">Binds 1 Mg(2+) ion per subunit. The magnesium is bound as Mg-PRPP.</text>
</comment>
<comment type="activity regulation">
    <text evidence="1">Allosterically activated by GTP.</text>
</comment>
<comment type="pathway">
    <text evidence="1">Pyrimidine metabolism; UMP biosynthesis via salvage pathway; UMP from uracil: step 1/1.</text>
</comment>
<comment type="similarity">
    <text evidence="1">Belongs to the UPRTase family.</text>
</comment>
<dbReference type="EC" id="2.4.2.9" evidence="1"/>
<dbReference type="EMBL" id="AL596173">
    <property type="protein sequence ID" value="CAC97908.1"/>
    <property type="molecule type" value="Genomic_DNA"/>
</dbReference>
<dbReference type="PIR" id="AD1767">
    <property type="entry name" value="AD1767"/>
</dbReference>
<dbReference type="RefSeq" id="WP_003764001.1">
    <property type="nucleotide sequence ID" value="NC_003212.1"/>
</dbReference>
<dbReference type="SMR" id="Q927V5"/>
<dbReference type="STRING" id="272626.gene:17567062"/>
<dbReference type="GeneID" id="93235946"/>
<dbReference type="KEGG" id="lin:upp"/>
<dbReference type="eggNOG" id="COG0035">
    <property type="taxonomic scope" value="Bacteria"/>
</dbReference>
<dbReference type="HOGENOM" id="CLU_067096_2_2_9"/>
<dbReference type="OrthoDB" id="9781675at2"/>
<dbReference type="UniPathway" id="UPA00574">
    <property type="reaction ID" value="UER00636"/>
</dbReference>
<dbReference type="Proteomes" id="UP000002513">
    <property type="component" value="Chromosome"/>
</dbReference>
<dbReference type="GO" id="GO:0005525">
    <property type="term" value="F:GTP binding"/>
    <property type="evidence" value="ECO:0007669"/>
    <property type="project" value="UniProtKB-KW"/>
</dbReference>
<dbReference type="GO" id="GO:0000287">
    <property type="term" value="F:magnesium ion binding"/>
    <property type="evidence" value="ECO:0007669"/>
    <property type="project" value="UniProtKB-UniRule"/>
</dbReference>
<dbReference type="GO" id="GO:0004845">
    <property type="term" value="F:uracil phosphoribosyltransferase activity"/>
    <property type="evidence" value="ECO:0007669"/>
    <property type="project" value="UniProtKB-UniRule"/>
</dbReference>
<dbReference type="GO" id="GO:0044206">
    <property type="term" value="P:UMP salvage"/>
    <property type="evidence" value="ECO:0007669"/>
    <property type="project" value="UniProtKB-UniRule"/>
</dbReference>
<dbReference type="GO" id="GO:0006223">
    <property type="term" value="P:uracil salvage"/>
    <property type="evidence" value="ECO:0007669"/>
    <property type="project" value="InterPro"/>
</dbReference>
<dbReference type="CDD" id="cd06223">
    <property type="entry name" value="PRTases_typeI"/>
    <property type="match status" value="1"/>
</dbReference>
<dbReference type="FunFam" id="3.40.50.2020:FF:000003">
    <property type="entry name" value="Uracil phosphoribosyltransferase"/>
    <property type="match status" value="1"/>
</dbReference>
<dbReference type="Gene3D" id="3.40.50.2020">
    <property type="match status" value="1"/>
</dbReference>
<dbReference type="HAMAP" id="MF_01218_B">
    <property type="entry name" value="Upp_B"/>
    <property type="match status" value="1"/>
</dbReference>
<dbReference type="InterPro" id="IPR000836">
    <property type="entry name" value="PRibTrfase_dom"/>
</dbReference>
<dbReference type="InterPro" id="IPR029057">
    <property type="entry name" value="PRTase-like"/>
</dbReference>
<dbReference type="InterPro" id="IPR034332">
    <property type="entry name" value="Upp_B"/>
</dbReference>
<dbReference type="InterPro" id="IPR050054">
    <property type="entry name" value="UPRTase/APRTase"/>
</dbReference>
<dbReference type="InterPro" id="IPR005765">
    <property type="entry name" value="Ura_phspho_trans"/>
</dbReference>
<dbReference type="NCBIfam" id="NF001097">
    <property type="entry name" value="PRK00129.1"/>
    <property type="match status" value="1"/>
</dbReference>
<dbReference type="NCBIfam" id="TIGR01091">
    <property type="entry name" value="upp"/>
    <property type="match status" value="1"/>
</dbReference>
<dbReference type="PANTHER" id="PTHR32315">
    <property type="entry name" value="ADENINE PHOSPHORIBOSYLTRANSFERASE"/>
    <property type="match status" value="1"/>
</dbReference>
<dbReference type="PANTHER" id="PTHR32315:SF4">
    <property type="entry name" value="URACIL PHOSPHORIBOSYLTRANSFERASE, CHLOROPLASTIC"/>
    <property type="match status" value="1"/>
</dbReference>
<dbReference type="Pfam" id="PF14681">
    <property type="entry name" value="UPRTase"/>
    <property type="match status" value="1"/>
</dbReference>
<dbReference type="SUPFAM" id="SSF53271">
    <property type="entry name" value="PRTase-like"/>
    <property type="match status" value="1"/>
</dbReference>